<sequence length="138" mass="15447">MLIPRRVKHRKQHHPGRSGAATGGTEVSFGEWGIQALSPAYVTNRQIESARIAMTRHIKRGGKVWINIYPDRPLTKKPAETRMGSGKGSPEWWVANVKPGRVLFELSGVNEEVAREALRLAIHKLPLKARIVRREGGE</sequence>
<dbReference type="EMBL" id="CP001341">
    <property type="protein sequence ID" value="ACL40645.1"/>
    <property type="molecule type" value="Genomic_DNA"/>
</dbReference>
<dbReference type="RefSeq" id="WP_015937848.1">
    <property type="nucleotide sequence ID" value="NC_011886.1"/>
</dbReference>
<dbReference type="SMR" id="B8HCZ9"/>
<dbReference type="STRING" id="452863.Achl_2680"/>
<dbReference type="KEGG" id="ach:Achl_2680"/>
<dbReference type="eggNOG" id="COG0197">
    <property type="taxonomic scope" value="Bacteria"/>
</dbReference>
<dbReference type="HOGENOM" id="CLU_078858_2_1_11"/>
<dbReference type="OrthoDB" id="9802589at2"/>
<dbReference type="Proteomes" id="UP000002505">
    <property type="component" value="Chromosome"/>
</dbReference>
<dbReference type="GO" id="GO:0022625">
    <property type="term" value="C:cytosolic large ribosomal subunit"/>
    <property type="evidence" value="ECO:0007669"/>
    <property type="project" value="TreeGrafter"/>
</dbReference>
<dbReference type="GO" id="GO:0019843">
    <property type="term" value="F:rRNA binding"/>
    <property type="evidence" value="ECO:0007669"/>
    <property type="project" value="UniProtKB-UniRule"/>
</dbReference>
<dbReference type="GO" id="GO:0003735">
    <property type="term" value="F:structural constituent of ribosome"/>
    <property type="evidence" value="ECO:0007669"/>
    <property type="project" value="InterPro"/>
</dbReference>
<dbReference type="GO" id="GO:0000049">
    <property type="term" value="F:tRNA binding"/>
    <property type="evidence" value="ECO:0007669"/>
    <property type="project" value="UniProtKB-KW"/>
</dbReference>
<dbReference type="GO" id="GO:0006412">
    <property type="term" value="P:translation"/>
    <property type="evidence" value="ECO:0007669"/>
    <property type="project" value="UniProtKB-UniRule"/>
</dbReference>
<dbReference type="CDD" id="cd01433">
    <property type="entry name" value="Ribosomal_L16_L10e"/>
    <property type="match status" value="1"/>
</dbReference>
<dbReference type="FunFam" id="3.90.1170.10:FF:000001">
    <property type="entry name" value="50S ribosomal protein L16"/>
    <property type="match status" value="1"/>
</dbReference>
<dbReference type="Gene3D" id="3.90.1170.10">
    <property type="entry name" value="Ribosomal protein L10e/L16"/>
    <property type="match status" value="1"/>
</dbReference>
<dbReference type="HAMAP" id="MF_01342">
    <property type="entry name" value="Ribosomal_uL16"/>
    <property type="match status" value="1"/>
</dbReference>
<dbReference type="InterPro" id="IPR047873">
    <property type="entry name" value="Ribosomal_uL16"/>
</dbReference>
<dbReference type="InterPro" id="IPR000114">
    <property type="entry name" value="Ribosomal_uL16_bact-type"/>
</dbReference>
<dbReference type="InterPro" id="IPR020798">
    <property type="entry name" value="Ribosomal_uL16_CS"/>
</dbReference>
<dbReference type="InterPro" id="IPR016180">
    <property type="entry name" value="Ribosomal_uL16_dom"/>
</dbReference>
<dbReference type="InterPro" id="IPR036920">
    <property type="entry name" value="Ribosomal_uL16_sf"/>
</dbReference>
<dbReference type="NCBIfam" id="TIGR01164">
    <property type="entry name" value="rplP_bact"/>
    <property type="match status" value="1"/>
</dbReference>
<dbReference type="PANTHER" id="PTHR12220">
    <property type="entry name" value="50S/60S RIBOSOMAL PROTEIN L16"/>
    <property type="match status" value="1"/>
</dbReference>
<dbReference type="PANTHER" id="PTHR12220:SF13">
    <property type="entry name" value="LARGE RIBOSOMAL SUBUNIT PROTEIN UL16M"/>
    <property type="match status" value="1"/>
</dbReference>
<dbReference type="Pfam" id="PF00252">
    <property type="entry name" value="Ribosomal_L16"/>
    <property type="match status" value="1"/>
</dbReference>
<dbReference type="PRINTS" id="PR00060">
    <property type="entry name" value="RIBOSOMALL16"/>
</dbReference>
<dbReference type="SUPFAM" id="SSF54686">
    <property type="entry name" value="Ribosomal protein L16p/L10e"/>
    <property type="match status" value="1"/>
</dbReference>
<dbReference type="PROSITE" id="PS00586">
    <property type="entry name" value="RIBOSOMAL_L16_1"/>
    <property type="match status" value="1"/>
</dbReference>
<dbReference type="PROSITE" id="PS00701">
    <property type="entry name" value="RIBOSOMAL_L16_2"/>
    <property type="match status" value="1"/>
</dbReference>
<name>RL16_PSECP</name>
<accession>B8HCZ9</accession>
<proteinExistence type="inferred from homology"/>
<protein>
    <recommendedName>
        <fullName evidence="1">Large ribosomal subunit protein uL16</fullName>
    </recommendedName>
    <alternativeName>
        <fullName evidence="3">50S ribosomal protein L16</fullName>
    </alternativeName>
</protein>
<keyword id="KW-0687">Ribonucleoprotein</keyword>
<keyword id="KW-0689">Ribosomal protein</keyword>
<keyword id="KW-0694">RNA-binding</keyword>
<keyword id="KW-0699">rRNA-binding</keyword>
<keyword id="KW-0820">tRNA-binding</keyword>
<evidence type="ECO:0000255" key="1">
    <source>
        <dbReference type="HAMAP-Rule" id="MF_01342"/>
    </source>
</evidence>
<evidence type="ECO:0000256" key="2">
    <source>
        <dbReference type="SAM" id="MobiDB-lite"/>
    </source>
</evidence>
<evidence type="ECO:0000305" key="3"/>
<comment type="function">
    <text evidence="1">Binds 23S rRNA and is also seen to make contacts with the A and possibly P site tRNAs.</text>
</comment>
<comment type="subunit">
    <text evidence="1">Part of the 50S ribosomal subunit.</text>
</comment>
<comment type="similarity">
    <text evidence="1">Belongs to the universal ribosomal protein uL16 family.</text>
</comment>
<gene>
    <name evidence="1" type="primary">rplP</name>
    <name type="ordered locus">Achl_2680</name>
</gene>
<feature type="chain" id="PRO_1000166332" description="Large ribosomal subunit protein uL16">
    <location>
        <begin position="1"/>
        <end position="138"/>
    </location>
</feature>
<feature type="region of interest" description="Disordered" evidence="2">
    <location>
        <begin position="1"/>
        <end position="25"/>
    </location>
</feature>
<feature type="compositionally biased region" description="Basic residues" evidence="2">
    <location>
        <begin position="1"/>
        <end position="16"/>
    </location>
</feature>
<reference key="1">
    <citation type="submission" date="2009-01" db="EMBL/GenBank/DDBJ databases">
        <title>Complete sequence of chromosome of Arthrobacter chlorophenolicus A6.</title>
        <authorList>
            <consortium name="US DOE Joint Genome Institute"/>
            <person name="Lucas S."/>
            <person name="Copeland A."/>
            <person name="Lapidus A."/>
            <person name="Glavina del Rio T."/>
            <person name="Tice H."/>
            <person name="Bruce D."/>
            <person name="Goodwin L."/>
            <person name="Pitluck S."/>
            <person name="Goltsman E."/>
            <person name="Clum A."/>
            <person name="Larimer F."/>
            <person name="Land M."/>
            <person name="Hauser L."/>
            <person name="Kyrpides N."/>
            <person name="Mikhailova N."/>
            <person name="Jansson J."/>
            <person name="Richardson P."/>
        </authorList>
    </citation>
    <scope>NUCLEOTIDE SEQUENCE [LARGE SCALE GENOMIC DNA]</scope>
    <source>
        <strain>ATCC 700700 / DSM 12829 / CIP 107037 / JCM 12360 / KCTC 9906 / NCIMB 13794 / A6</strain>
    </source>
</reference>
<organism>
    <name type="scientific">Pseudarthrobacter chlorophenolicus (strain ATCC 700700 / DSM 12829 / CIP 107037 / JCM 12360 / KCTC 9906 / NCIMB 13794 / A6)</name>
    <name type="common">Arthrobacter chlorophenolicus</name>
    <dbReference type="NCBI Taxonomy" id="452863"/>
    <lineage>
        <taxon>Bacteria</taxon>
        <taxon>Bacillati</taxon>
        <taxon>Actinomycetota</taxon>
        <taxon>Actinomycetes</taxon>
        <taxon>Micrococcales</taxon>
        <taxon>Micrococcaceae</taxon>
        <taxon>Pseudarthrobacter</taxon>
    </lineage>
</organism>